<proteinExistence type="inferred from homology"/>
<accession>C0QUB7</accession>
<comment type="similarity">
    <text evidence="1">Belongs to the bacterial ribosomal protein bL28 family.</text>
</comment>
<organism>
    <name type="scientific">Persephonella marina (strain DSM 14350 / EX-H1)</name>
    <dbReference type="NCBI Taxonomy" id="123214"/>
    <lineage>
        <taxon>Bacteria</taxon>
        <taxon>Pseudomonadati</taxon>
        <taxon>Aquificota</taxon>
        <taxon>Aquificia</taxon>
        <taxon>Aquificales</taxon>
        <taxon>Hydrogenothermaceae</taxon>
        <taxon>Persephonella</taxon>
    </lineage>
</organism>
<keyword id="KW-1185">Reference proteome</keyword>
<keyword id="KW-0687">Ribonucleoprotein</keyword>
<keyword id="KW-0689">Ribosomal protein</keyword>
<evidence type="ECO:0000255" key="1">
    <source>
        <dbReference type="HAMAP-Rule" id="MF_00373"/>
    </source>
</evidence>
<evidence type="ECO:0000305" key="2"/>
<sequence>MAVCQICGKKTAHGNRVAHSATTTKRTWKPNLQKVKAVLPDGTTKKIYVCAKCLKAGKVRKAVR</sequence>
<reference key="1">
    <citation type="journal article" date="2009" name="J. Bacteriol.">
        <title>Complete and draft genome sequences of six members of the Aquificales.</title>
        <authorList>
            <person name="Reysenbach A.-L."/>
            <person name="Hamamura N."/>
            <person name="Podar M."/>
            <person name="Griffiths E."/>
            <person name="Ferreira S."/>
            <person name="Hochstein R."/>
            <person name="Heidelberg J."/>
            <person name="Johnson J."/>
            <person name="Mead D."/>
            <person name="Pohorille A."/>
            <person name="Sarmiento M."/>
            <person name="Schweighofer K."/>
            <person name="Seshadri R."/>
            <person name="Voytek M.A."/>
        </authorList>
    </citation>
    <scope>NUCLEOTIDE SEQUENCE [LARGE SCALE GENOMIC DNA]</scope>
    <source>
        <strain>DSM 14350 / EX-H1</strain>
    </source>
</reference>
<feature type="chain" id="PRO_1000195934" description="Large ribosomal subunit protein bL28">
    <location>
        <begin position="1"/>
        <end position="64"/>
    </location>
</feature>
<protein>
    <recommendedName>
        <fullName evidence="1">Large ribosomal subunit protein bL28</fullName>
    </recommendedName>
    <alternativeName>
        <fullName evidence="2">50S ribosomal protein L28</fullName>
    </alternativeName>
</protein>
<gene>
    <name evidence="1" type="primary">rpmB</name>
    <name type="ordered locus">PERMA_0492</name>
</gene>
<name>RL28_PERMH</name>
<dbReference type="EMBL" id="CP001230">
    <property type="protein sequence ID" value="ACO04215.1"/>
    <property type="molecule type" value="Genomic_DNA"/>
</dbReference>
<dbReference type="RefSeq" id="WP_012676453.1">
    <property type="nucleotide sequence ID" value="NC_012440.1"/>
</dbReference>
<dbReference type="SMR" id="C0QUB7"/>
<dbReference type="STRING" id="123214.PERMA_0492"/>
<dbReference type="PaxDb" id="123214-PERMA_0492"/>
<dbReference type="KEGG" id="pmx:PERMA_0492"/>
<dbReference type="eggNOG" id="COG0227">
    <property type="taxonomic scope" value="Bacteria"/>
</dbReference>
<dbReference type="HOGENOM" id="CLU_064548_7_0_0"/>
<dbReference type="OrthoDB" id="9805609at2"/>
<dbReference type="Proteomes" id="UP000001366">
    <property type="component" value="Chromosome"/>
</dbReference>
<dbReference type="GO" id="GO:1990904">
    <property type="term" value="C:ribonucleoprotein complex"/>
    <property type="evidence" value="ECO:0007669"/>
    <property type="project" value="UniProtKB-KW"/>
</dbReference>
<dbReference type="GO" id="GO:0005840">
    <property type="term" value="C:ribosome"/>
    <property type="evidence" value="ECO:0007669"/>
    <property type="project" value="UniProtKB-KW"/>
</dbReference>
<dbReference type="GO" id="GO:0003735">
    <property type="term" value="F:structural constituent of ribosome"/>
    <property type="evidence" value="ECO:0007669"/>
    <property type="project" value="InterPro"/>
</dbReference>
<dbReference type="GO" id="GO:0006412">
    <property type="term" value="P:translation"/>
    <property type="evidence" value="ECO:0007669"/>
    <property type="project" value="UniProtKB-UniRule"/>
</dbReference>
<dbReference type="Gene3D" id="2.30.170.40">
    <property type="entry name" value="Ribosomal protein L28/L24"/>
    <property type="match status" value="1"/>
</dbReference>
<dbReference type="HAMAP" id="MF_00373">
    <property type="entry name" value="Ribosomal_bL28"/>
    <property type="match status" value="1"/>
</dbReference>
<dbReference type="InterPro" id="IPR050096">
    <property type="entry name" value="Bacterial_rp_bL28"/>
</dbReference>
<dbReference type="InterPro" id="IPR026569">
    <property type="entry name" value="Ribosomal_bL28"/>
</dbReference>
<dbReference type="InterPro" id="IPR034704">
    <property type="entry name" value="Ribosomal_bL28/bL31-like_sf"/>
</dbReference>
<dbReference type="InterPro" id="IPR001383">
    <property type="entry name" value="Ribosomal_bL28_bact-type"/>
</dbReference>
<dbReference type="InterPro" id="IPR037147">
    <property type="entry name" value="Ribosomal_bL28_sf"/>
</dbReference>
<dbReference type="NCBIfam" id="TIGR00009">
    <property type="entry name" value="L28"/>
    <property type="match status" value="1"/>
</dbReference>
<dbReference type="PANTHER" id="PTHR39080">
    <property type="entry name" value="50S RIBOSOMAL PROTEIN L28"/>
    <property type="match status" value="1"/>
</dbReference>
<dbReference type="PANTHER" id="PTHR39080:SF1">
    <property type="entry name" value="LARGE RIBOSOMAL SUBUNIT PROTEIN BL28A"/>
    <property type="match status" value="1"/>
</dbReference>
<dbReference type="Pfam" id="PF00830">
    <property type="entry name" value="Ribosomal_L28"/>
    <property type="match status" value="1"/>
</dbReference>
<dbReference type="SUPFAM" id="SSF143800">
    <property type="entry name" value="L28p-like"/>
    <property type="match status" value="1"/>
</dbReference>